<comment type="function">
    <text>Major component of the virus occlusion bodies, which are large proteinaceous structures (polyhedra), that protect the virus from the outside environment for extended periods until they are ingested by insect larvae.</text>
</comment>
<comment type="similarity">
    <text evidence="1">Belongs to the polyhedrin family.</text>
</comment>
<name>PYHD_NPVOS</name>
<organismHost>
    <name type="scientific">Lepidoptera</name>
    <name type="common">butterflies and moths</name>
    <dbReference type="NCBI Taxonomy" id="7088"/>
</organismHost>
<proteinExistence type="inferred from homology"/>
<feature type="chain" id="PRO_0000217255" description="Polyhedrin">
    <location>
        <begin position="1"/>
        <end position="246"/>
    </location>
</feature>
<sequence>MYTRYSYNPSLGRTYVYDNKYYKNLGAVIKNAKRKKHQIEHEAEEHTLDPLDKYLVAEDPFLGPGKNQKLTLFKEIRNVKPDTMKLVVNWSGKEFLRETWTRFMEDSFPIVNDQEIMDVFLVINMRPTRPNRCFRFLAQHALRCDPEYVPHEVIRIVEPSYVGSNNEYRISLAKRGGGCPVMNLHAEYTNSFEEFINRVHWENFYKPIVYVGTDSAEEEEILLEVSLVFKIKEFAPDAPLYSGPAY</sequence>
<protein>
    <recommendedName>
        <fullName>Polyhedrin</fullName>
    </recommendedName>
    <alternativeName>
        <fullName>Major occlusion protein</fullName>
    </alternativeName>
</protein>
<gene>
    <name type="primary">PH</name>
    <name type="synonym">P29</name>
    <name type="synonym">POLH</name>
</gene>
<organism>
    <name type="scientific">Orgyia pseudotsugata single capsid nuclear polyhedrosis virus</name>
    <name type="common">OpSNPV</name>
    <dbReference type="NCBI Taxonomy" id="10450"/>
    <lineage>
        <taxon>Viruses</taxon>
        <taxon>Viruses incertae sedis</taxon>
        <taxon>Naldaviricetes</taxon>
        <taxon>Lefavirales</taxon>
        <taxon>Baculoviridae</taxon>
        <taxon>Alphabaculovirus</taxon>
    </lineage>
</organism>
<dbReference type="EMBL" id="M32433">
    <property type="protein sequence ID" value="AAA46739.1"/>
    <property type="molecule type" value="Genomic_DNA"/>
</dbReference>
<dbReference type="PIR" id="A25418">
    <property type="entry name" value="PYNVTM"/>
</dbReference>
<dbReference type="SMR" id="P07388"/>
<dbReference type="GO" id="GO:0039679">
    <property type="term" value="C:viral occlusion body"/>
    <property type="evidence" value="ECO:0007669"/>
    <property type="project" value="UniProtKB-KW"/>
</dbReference>
<dbReference type="GO" id="GO:0005198">
    <property type="term" value="F:structural molecule activity"/>
    <property type="evidence" value="ECO:0007669"/>
    <property type="project" value="InterPro"/>
</dbReference>
<dbReference type="InterPro" id="IPR001746">
    <property type="entry name" value="Polyhedrin"/>
</dbReference>
<dbReference type="Pfam" id="PF00738">
    <property type="entry name" value="Polyhedrin"/>
    <property type="match status" value="1"/>
</dbReference>
<accession>P07388</accession>
<keyword id="KW-0842">Viral occlusion body</keyword>
<evidence type="ECO:0000305" key="1"/>
<reference key="1">
    <citation type="journal article" date="1986" name="J. Gen. Virol.">
        <title>Location and nucleotide sequence of the Orgyia pseudotsugata single nucleocapsid nuclear polyhedrosis virus polyhedrin gene.</title>
        <authorList>
            <person name="Leisy D."/>
            <person name="Nesson M."/>
            <person name="Pearson M."/>
            <person name="Rohrmann G."/>
            <person name="Beaudreau G.S."/>
        </authorList>
    </citation>
    <scope>NUCLEOTIDE SEQUENCE [GENOMIC DNA]</scope>
</reference>